<dbReference type="EC" id="1.8.1.2" evidence="1"/>
<dbReference type="EMBL" id="CP000946">
    <property type="protein sequence ID" value="ACA76617.1"/>
    <property type="molecule type" value="Genomic_DNA"/>
</dbReference>
<dbReference type="RefSeq" id="WP_000211906.1">
    <property type="nucleotide sequence ID" value="NZ_MTFT01000049.1"/>
</dbReference>
<dbReference type="BMRB" id="B1IU77"/>
<dbReference type="SMR" id="B1IU77"/>
<dbReference type="KEGG" id="ecl:EcolC_0948"/>
<dbReference type="HOGENOM" id="CLU_001570_17_7_6"/>
<dbReference type="UniPathway" id="UPA00140">
    <property type="reaction ID" value="UER00207"/>
</dbReference>
<dbReference type="GO" id="GO:0005829">
    <property type="term" value="C:cytosol"/>
    <property type="evidence" value="ECO:0007669"/>
    <property type="project" value="TreeGrafter"/>
</dbReference>
<dbReference type="GO" id="GO:0050660">
    <property type="term" value="F:flavin adenine dinucleotide binding"/>
    <property type="evidence" value="ECO:0007669"/>
    <property type="project" value="InterPro"/>
</dbReference>
<dbReference type="GO" id="GO:0010181">
    <property type="term" value="F:FMN binding"/>
    <property type="evidence" value="ECO:0007669"/>
    <property type="project" value="InterPro"/>
</dbReference>
<dbReference type="GO" id="GO:0004783">
    <property type="term" value="F:sulfite reductase (NADPH) activity"/>
    <property type="evidence" value="ECO:0007669"/>
    <property type="project" value="UniProtKB-UniRule"/>
</dbReference>
<dbReference type="GO" id="GO:0019344">
    <property type="term" value="P:cysteine biosynthetic process"/>
    <property type="evidence" value="ECO:0007669"/>
    <property type="project" value="UniProtKB-KW"/>
</dbReference>
<dbReference type="GO" id="GO:0070814">
    <property type="term" value="P:hydrogen sulfide biosynthetic process"/>
    <property type="evidence" value="ECO:0007669"/>
    <property type="project" value="UniProtKB-UniRule"/>
</dbReference>
<dbReference type="GO" id="GO:0000103">
    <property type="term" value="P:sulfate assimilation"/>
    <property type="evidence" value="ECO:0007669"/>
    <property type="project" value="UniProtKB-UniRule"/>
</dbReference>
<dbReference type="CDD" id="cd06199">
    <property type="entry name" value="SiR"/>
    <property type="match status" value="1"/>
</dbReference>
<dbReference type="FunFam" id="3.40.50.80:FF:000001">
    <property type="entry name" value="NADPH--cytochrome P450 reductase 1"/>
    <property type="match status" value="1"/>
</dbReference>
<dbReference type="FunFam" id="1.20.990.10:FF:000004">
    <property type="entry name" value="Sulfite reductase [NADPH] flavoprotein alpha-component"/>
    <property type="match status" value="1"/>
</dbReference>
<dbReference type="FunFam" id="3.40.50.360:FF:000018">
    <property type="entry name" value="Sulfite reductase [NADPH] flavoprotein alpha-component"/>
    <property type="match status" value="1"/>
</dbReference>
<dbReference type="Gene3D" id="3.40.50.360">
    <property type="match status" value="1"/>
</dbReference>
<dbReference type="Gene3D" id="1.20.990.10">
    <property type="entry name" value="NADPH-cytochrome p450 Reductase, Chain A, domain 3"/>
    <property type="match status" value="1"/>
</dbReference>
<dbReference type="Gene3D" id="3.40.50.80">
    <property type="entry name" value="Nucleotide-binding domain of ferredoxin-NADP reductase (FNR) module"/>
    <property type="match status" value="1"/>
</dbReference>
<dbReference type="Gene3D" id="2.40.30.10">
    <property type="entry name" value="Translation factors"/>
    <property type="match status" value="1"/>
</dbReference>
<dbReference type="HAMAP" id="MF_01541">
    <property type="entry name" value="CysJ"/>
    <property type="match status" value="1"/>
</dbReference>
<dbReference type="InterPro" id="IPR010199">
    <property type="entry name" value="CysJ"/>
</dbReference>
<dbReference type="InterPro" id="IPR003097">
    <property type="entry name" value="CysJ-like_FAD-binding"/>
</dbReference>
<dbReference type="InterPro" id="IPR029758">
    <property type="entry name" value="CysJ_Proteobact"/>
</dbReference>
<dbReference type="InterPro" id="IPR017927">
    <property type="entry name" value="FAD-bd_FR_type"/>
</dbReference>
<dbReference type="InterPro" id="IPR001094">
    <property type="entry name" value="Flavdoxin-like"/>
</dbReference>
<dbReference type="InterPro" id="IPR008254">
    <property type="entry name" value="Flavodoxin/NO_synth"/>
</dbReference>
<dbReference type="InterPro" id="IPR001709">
    <property type="entry name" value="Flavoprot_Pyr_Nucl_cyt_Rdtase"/>
</dbReference>
<dbReference type="InterPro" id="IPR029039">
    <property type="entry name" value="Flavoprotein-like_sf"/>
</dbReference>
<dbReference type="InterPro" id="IPR039261">
    <property type="entry name" value="FNR_nucleotide-bd"/>
</dbReference>
<dbReference type="InterPro" id="IPR023173">
    <property type="entry name" value="NADPH_Cyt_P450_Rdtase_alpha"/>
</dbReference>
<dbReference type="InterPro" id="IPR001433">
    <property type="entry name" value="OxRdtase_FAD/NAD-bd"/>
</dbReference>
<dbReference type="InterPro" id="IPR017938">
    <property type="entry name" value="Riboflavin_synthase-like_b-brl"/>
</dbReference>
<dbReference type="NCBIfam" id="TIGR01931">
    <property type="entry name" value="cysJ"/>
    <property type="match status" value="1"/>
</dbReference>
<dbReference type="NCBIfam" id="NF004859">
    <property type="entry name" value="PRK06214.1"/>
    <property type="match status" value="1"/>
</dbReference>
<dbReference type="NCBIfam" id="NF008197">
    <property type="entry name" value="PRK10953.1"/>
    <property type="match status" value="1"/>
</dbReference>
<dbReference type="PANTHER" id="PTHR19384:SF128">
    <property type="entry name" value="NADPH OXIDOREDUCTASE A"/>
    <property type="match status" value="1"/>
</dbReference>
<dbReference type="PANTHER" id="PTHR19384">
    <property type="entry name" value="NITRIC OXIDE SYNTHASE-RELATED"/>
    <property type="match status" value="1"/>
</dbReference>
<dbReference type="Pfam" id="PF00667">
    <property type="entry name" value="FAD_binding_1"/>
    <property type="match status" value="1"/>
</dbReference>
<dbReference type="Pfam" id="PF00258">
    <property type="entry name" value="Flavodoxin_1"/>
    <property type="match status" value="1"/>
</dbReference>
<dbReference type="Pfam" id="PF00175">
    <property type="entry name" value="NAD_binding_1"/>
    <property type="match status" value="1"/>
</dbReference>
<dbReference type="PIRSF" id="PIRSF000207">
    <property type="entry name" value="SiR-FP_CysJ"/>
    <property type="match status" value="1"/>
</dbReference>
<dbReference type="PRINTS" id="PR00369">
    <property type="entry name" value="FLAVODOXIN"/>
</dbReference>
<dbReference type="PRINTS" id="PR00371">
    <property type="entry name" value="FPNCR"/>
</dbReference>
<dbReference type="SUPFAM" id="SSF52343">
    <property type="entry name" value="Ferredoxin reductase-like, C-terminal NADP-linked domain"/>
    <property type="match status" value="1"/>
</dbReference>
<dbReference type="SUPFAM" id="SSF52218">
    <property type="entry name" value="Flavoproteins"/>
    <property type="match status" value="1"/>
</dbReference>
<dbReference type="SUPFAM" id="SSF63380">
    <property type="entry name" value="Riboflavin synthase domain-like"/>
    <property type="match status" value="1"/>
</dbReference>
<dbReference type="PROSITE" id="PS51384">
    <property type="entry name" value="FAD_FR"/>
    <property type="match status" value="1"/>
</dbReference>
<dbReference type="PROSITE" id="PS50902">
    <property type="entry name" value="FLAVODOXIN_LIKE"/>
    <property type="match status" value="1"/>
</dbReference>
<keyword id="KW-0028">Amino-acid biosynthesis</keyword>
<keyword id="KW-0198">Cysteine biosynthesis</keyword>
<keyword id="KW-0249">Electron transport</keyword>
<keyword id="KW-0274">FAD</keyword>
<keyword id="KW-0285">Flavoprotein</keyword>
<keyword id="KW-0288">FMN</keyword>
<keyword id="KW-0521">NADP</keyword>
<keyword id="KW-0560">Oxidoreductase</keyword>
<keyword id="KW-0813">Transport</keyword>
<accession>B1IU77</accession>
<feature type="chain" id="PRO_1000087634" description="Sulfite reductase [NADPH] flavoprotein alpha-component">
    <location>
        <begin position="1"/>
        <end position="599"/>
    </location>
</feature>
<feature type="domain" description="Flavodoxin-like" evidence="1">
    <location>
        <begin position="64"/>
        <end position="202"/>
    </location>
</feature>
<feature type="domain" description="FAD-binding FR-type" evidence="1">
    <location>
        <begin position="234"/>
        <end position="448"/>
    </location>
</feature>
<feature type="binding site" evidence="1">
    <location>
        <begin position="70"/>
        <end position="75"/>
    </location>
    <ligand>
        <name>FMN</name>
        <dbReference type="ChEBI" id="CHEBI:58210"/>
    </ligand>
</feature>
<feature type="binding site" evidence="1">
    <location>
        <begin position="117"/>
        <end position="120"/>
    </location>
    <ligand>
        <name>FMN</name>
        <dbReference type="ChEBI" id="CHEBI:58210"/>
    </ligand>
</feature>
<feature type="binding site" evidence="1">
    <location>
        <begin position="153"/>
        <end position="162"/>
    </location>
    <ligand>
        <name>FMN</name>
        <dbReference type="ChEBI" id="CHEBI:58210"/>
    </ligand>
</feature>
<feature type="binding site" evidence="1">
    <location>
        <position position="322"/>
    </location>
    <ligand>
        <name>FAD</name>
        <dbReference type="ChEBI" id="CHEBI:57692"/>
    </ligand>
</feature>
<feature type="binding site" evidence="1">
    <location>
        <position position="356"/>
    </location>
    <ligand>
        <name>FAD</name>
        <dbReference type="ChEBI" id="CHEBI:57692"/>
    </ligand>
</feature>
<feature type="binding site" evidence="1">
    <location>
        <begin position="386"/>
        <end position="389"/>
    </location>
    <ligand>
        <name>FAD</name>
        <dbReference type="ChEBI" id="CHEBI:57692"/>
    </ligand>
</feature>
<feature type="binding site" evidence="1">
    <location>
        <begin position="404"/>
        <end position="406"/>
    </location>
    <ligand>
        <name>FAD</name>
        <dbReference type="ChEBI" id="CHEBI:57692"/>
    </ligand>
</feature>
<feature type="binding site" evidence="1">
    <location>
        <position position="410"/>
    </location>
    <ligand>
        <name>FAD</name>
        <dbReference type="ChEBI" id="CHEBI:57692"/>
    </ligand>
</feature>
<feature type="binding site" evidence="1">
    <location>
        <begin position="419"/>
        <end position="422"/>
    </location>
    <ligand>
        <name>FAD</name>
        <dbReference type="ChEBI" id="CHEBI:57692"/>
    </ligand>
</feature>
<feature type="binding site" evidence="1">
    <location>
        <begin position="519"/>
        <end position="520"/>
    </location>
    <ligand>
        <name>NADP(+)</name>
        <dbReference type="ChEBI" id="CHEBI:58349"/>
    </ligand>
</feature>
<feature type="binding site" evidence="1">
    <location>
        <begin position="525"/>
        <end position="529"/>
    </location>
    <ligand>
        <name>NADP(+)</name>
        <dbReference type="ChEBI" id="CHEBI:58349"/>
    </ligand>
</feature>
<feature type="binding site" evidence="1">
    <location>
        <position position="561"/>
    </location>
    <ligand>
        <name>NADP(+)</name>
        <dbReference type="ChEBI" id="CHEBI:58349"/>
    </ligand>
</feature>
<feature type="binding site" evidence="1">
    <location>
        <position position="599"/>
    </location>
    <ligand>
        <name>FAD</name>
        <dbReference type="ChEBI" id="CHEBI:57692"/>
    </ligand>
</feature>
<comment type="function">
    <text evidence="1">Component of the sulfite reductase complex that catalyzes the 6-electron reduction of sulfite to sulfide. This is one of several activities required for the biosynthesis of L-cysteine from sulfate. The flavoprotein component catalyzes the electron flow from NADPH -&gt; FAD -&gt; FMN to the hemoprotein component.</text>
</comment>
<comment type="catalytic activity">
    <reaction evidence="1">
        <text>hydrogen sulfide + 3 NADP(+) + 3 H2O = sulfite + 3 NADPH + 4 H(+)</text>
        <dbReference type="Rhea" id="RHEA:13801"/>
        <dbReference type="ChEBI" id="CHEBI:15377"/>
        <dbReference type="ChEBI" id="CHEBI:15378"/>
        <dbReference type="ChEBI" id="CHEBI:17359"/>
        <dbReference type="ChEBI" id="CHEBI:29919"/>
        <dbReference type="ChEBI" id="CHEBI:57783"/>
        <dbReference type="ChEBI" id="CHEBI:58349"/>
        <dbReference type="EC" id="1.8.1.2"/>
    </reaction>
</comment>
<comment type="cofactor">
    <cofactor evidence="1">
        <name>FAD</name>
        <dbReference type="ChEBI" id="CHEBI:57692"/>
    </cofactor>
    <text evidence="1">Binds 1 FAD per subunit.</text>
</comment>
<comment type="cofactor">
    <cofactor evidence="1">
        <name>FMN</name>
        <dbReference type="ChEBI" id="CHEBI:58210"/>
    </cofactor>
    <text evidence="1">Binds 1 FMN per subunit.</text>
</comment>
<comment type="pathway">
    <text evidence="1">Sulfur metabolism; hydrogen sulfide biosynthesis; hydrogen sulfide from sulfite (NADPH route): step 1/1.</text>
</comment>
<comment type="subunit">
    <text evidence="1">Alpha(8)-beta(8). The alpha component is a flavoprotein, the beta component is a hemoprotein.</text>
</comment>
<comment type="similarity">
    <text evidence="1">Belongs to the NADPH-dependent sulphite reductase flavoprotein subunit CysJ family.</text>
</comment>
<comment type="similarity">
    <text evidence="1">In the N-terminal section; belongs to the flavodoxin family.</text>
</comment>
<comment type="similarity">
    <text evidence="1">In the C-terminal section; belongs to the flavoprotein pyridine nucleotide cytochrome reductase family.</text>
</comment>
<proteinExistence type="inferred from homology"/>
<name>CYSJ_ECOLC</name>
<gene>
    <name evidence="1" type="primary">cysJ</name>
    <name type="ordered locus">EcolC_0948</name>
</gene>
<sequence length="599" mass="66252">MTTQVPPSALLPLNPEQLARLQAATTDLTPTQLAWVSGYFWGVLNQQPAALAATPAPAAEMPGITIISASQTGNARRVAEALRDDLLAAKLNVKLVNAGDYKFKQIASEKLLIVVTSTQGEGEPPEEAVALHKFLFSKKAPKLENTAFAVFSLGDSSYEFFCQSGKDFDSKLAELGGERLLDRVDADVEYQAAASEWRARVVDALKSRAPVAAPSQSVATGAVNEIHTSPYSKDAPLVASLSVNQKITGRNSEKDVRHIEIDLGDSGLRYQPGDALGVWYQNDPALVKELVELLWLKGDEPVTVEGKTLPLNEALQWHFELTVNTANIVENYATLTRSETLLPLVGDKAKLQHYAATTPIVDMVRFSPAQLDAEALINLLRPLTPRLYSIASSQAEVENEVHVTVGVVRYDVEGRARAGGASSFLADRVEEEGEVRVFIEHNDNFRLPANPETPVIMIGPGTGIAPFRAFMQQRAADEAPGKNWLFFGNPHFTEDFLYQVEWQRYVKDGVLTRIDLAWSRDQKEKVYVQDKLREQGAELWRWINDGAHIYVCGDANRMAKDVEQALLEVIAEFGGMDTEAADEFLSELRVERRYQRDVY</sequence>
<reference key="1">
    <citation type="submission" date="2008-02" db="EMBL/GenBank/DDBJ databases">
        <title>Complete sequence of Escherichia coli C str. ATCC 8739.</title>
        <authorList>
            <person name="Copeland A."/>
            <person name="Lucas S."/>
            <person name="Lapidus A."/>
            <person name="Glavina del Rio T."/>
            <person name="Dalin E."/>
            <person name="Tice H."/>
            <person name="Bruce D."/>
            <person name="Goodwin L."/>
            <person name="Pitluck S."/>
            <person name="Kiss H."/>
            <person name="Brettin T."/>
            <person name="Detter J.C."/>
            <person name="Han C."/>
            <person name="Kuske C.R."/>
            <person name="Schmutz J."/>
            <person name="Larimer F."/>
            <person name="Land M."/>
            <person name="Hauser L."/>
            <person name="Kyrpides N."/>
            <person name="Mikhailova N."/>
            <person name="Ingram L."/>
            <person name="Richardson P."/>
        </authorList>
    </citation>
    <scope>NUCLEOTIDE SEQUENCE [LARGE SCALE GENOMIC DNA]</scope>
    <source>
        <strain>ATCC 8739 / DSM 1576 / NBRC 3972 / NCIMB 8545 / WDCM 00012 / Crooks</strain>
    </source>
</reference>
<organism>
    <name type="scientific">Escherichia coli (strain ATCC 8739 / DSM 1576 / NBRC 3972 / NCIMB 8545 / WDCM 00012 / Crooks)</name>
    <dbReference type="NCBI Taxonomy" id="481805"/>
    <lineage>
        <taxon>Bacteria</taxon>
        <taxon>Pseudomonadati</taxon>
        <taxon>Pseudomonadota</taxon>
        <taxon>Gammaproteobacteria</taxon>
        <taxon>Enterobacterales</taxon>
        <taxon>Enterobacteriaceae</taxon>
        <taxon>Escherichia</taxon>
    </lineage>
</organism>
<protein>
    <recommendedName>
        <fullName evidence="1">Sulfite reductase [NADPH] flavoprotein alpha-component</fullName>
        <shortName evidence="1">SiR-FP</shortName>
        <ecNumber evidence="1">1.8.1.2</ecNumber>
    </recommendedName>
</protein>
<evidence type="ECO:0000255" key="1">
    <source>
        <dbReference type="HAMAP-Rule" id="MF_01541"/>
    </source>
</evidence>